<protein>
    <recommendedName>
        <fullName>Membrane-associated protein TcaA</fullName>
    </recommendedName>
</protein>
<sequence length="460" mass="52131">MKSCPKCGQQAQDDVQICTQCGHKFDSRQALYRKSTDEDIQTNNIKMRKMVPWAIGFFILILIIILFFLLRNFNSPEAQTKILVNAIENNDKQKVATLLSTKDNKVDSEEAKVYINYIKDEVGLKQFVSDLKNTVHKLNKSKTSVASYIQTRSGQNILRVSKNGTRYIFFDNMSFTAPTKQPIVKPKEKTKYEFKSGGKKKMVIAEANKVTPIGNFILGTYRIPAMKSTENGDFAGYLKFDFRQSNSETVDVTEDFEEANITVTLKGDTKLNDSSKKVTINDREMAFSSSKTYGPYPQNKDITISASGKAKGKTFTTQTKTIKASDLKYNTEITLNFDSEDIEDYVEKKEKEENSLKNKLIEFFAGYSLANNAAFNQSDFDFVSSYIKKGSSFYDDVKKRVSKGSLMMISSPQIIDAEKHGDKITATVRLINENGKQVDKEYELEQGSQDRLQLIKTSEK</sequence>
<gene>
    <name type="primary">tcaA</name>
    <name type="ordered locus">SAV2356</name>
</gene>
<accession>Q99RS0</accession>
<evidence type="ECO:0000250" key="1"/>
<evidence type="ECO:0000255" key="2"/>
<evidence type="ECO:0000269" key="3">
    <source>
    </source>
</evidence>
<evidence type="ECO:0000269" key="4">
    <source>
    </source>
</evidence>
<evidence type="ECO:0000305" key="5"/>
<name>TCAA_STAAM</name>
<proteinExistence type="evidence at transcript level"/>
<organism>
    <name type="scientific">Staphylococcus aureus (strain Mu50 / ATCC 700699)</name>
    <dbReference type="NCBI Taxonomy" id="158878"/>
    <lineage>
        <taxon>Bacteria</taxon>
        <taxon>Bacillati</taxon>
        <taxon>Bacillota</taxon>
        <taxon>Bacilli</taxon>
        <taxon>Bacillales</taxon>
        <taxon>Staphylococcaceae</taxon>
        <taxon>Staphylococcus</taxon>
    </lineage>
</organism>
<feature type="chain" id="PRO_0000333166" description="Membrane-associated protein TcaA">
    <location>
        <begin position="1"/>
        <end position="460"/>
    </location>
</feature>
<feature type="topological domain" description="Cytoplasmic" evidence="2">
    <location>
        <begin position="1"/>
        <end position="49"/>
    </location>
</feature>
<feature type="transmembrane region" description="Helical" evidence="2">
    <location>
        <begin position="50"/>
        <end position="70"/>
    </location>
</feature>
<feature type="topological domain" description="Extracellular" evidence="2">
    <location>
        <begin position="71"/>
        <end position="460"/>
    </location>
</feature>
<feature type="zinc finger region" description="C4-type" evidence="2">
    <location>
        <begin position="4"/>
        <end position="21"/>
    </location>
</feature>
<comment type="function">
    <text evidence="1">Plays a major role in decreasing resistance to glycopeptide antibiotics.</text>
</comment>
<comment type="subcellular location">
    <subcellularLocation>
        <location evidence="1">Cell membrane</location>
        <topology evidence="1">Single-pass membrane protein</topology>
    </subcellularLocation>
</comment>
<comment type="induction">
    <text evidence="3 4">Weakly induced by vancomycin.</text>
</comment>
<comment type="similarity">
    <text evidence="5">Belongs to the TcaA family.</text>
</comment>
<dbReference type="EMBL" id="BA000017">
    <property type="protein sequence ID" value="BAB58518.1"/>
    <property type="molecule type" value="Genomic_DNA"/>
</dbReference>
<dbReference type="RefSeq" id="WP_000833794.1">
    <property type="nucleotide sequence ID" value="NC_002758.2"/>
</dbReference>
<dbReference type="KEGG" id="sav:SAV2356"/>
<dbReference type="HOGENOM" id="CLU_047245_0_0_9"/>
<dbReference type="PhylomeDB" id="Q99RS0"/>
<dbReference type="Proteomes" id="UP000002481">
    <property type="component" value="Chromosome"/>
</dbReference>
<dbReference type="GO" id="GO:0005886">
    <property type="term" value="C:plasma membrane"/>
    <property type="evidence" value="ECO:0007669"/>
    <property type="project" value="UniProtKB-SubCell"/>
</dbReference>
<dbReference type="GO" id="GO:0008270">
    <property type="term" value="F:zinc ion binding"/>
    <property type="evidence" value="ECO:0007669"/>
    <property type="project" value="UniProtKB-KW"/>
</dbReference>
<dbReference type="GO" id="GO:0046677">
    <property type="term" value="P:response to antibiotic"/>
    <property type="evidence" value="ECO:0007669"/>
    <property type="project" value="UniProtKB-KW"/>
</dbReference>
<dbReference type="InterPro" id="IPR023599">
    <property type="entry name" value="Mem_prot_TcaA"/>
</dbReference>
<dbReference type="InterPro" id="IPR054529">
    <property type="entry name" value="TcaA_2nd"/>
</dbReference>
<dbReference type="InterPro" id="IPR054530">
    <property type="entry name" value="TcaA_4th"/>
</dbReference>
<dbReference type="PANTHER" id="PTHR40038">
    <property type="entry name" value="MEMBRANE-ASSOCIATED PROTEIN TCAA"/>
    <property type="match status" value="1"/>
</dbReference>
<dbReference type="PANTHER" id="PTHR40038:SF1">
    <property type="entry name" value="MEMBRANE-ASSOCIATED PROTEIN TCAA"/>
    <property type="match status" value="1"/>
</dbReference>
<dbReference type="Pfam" id="PF22813">
    <property type="entry name" value="TcaA_2nd"/>
    <property type="match status" value="1"/>
</dbReference>
<dbReference type="Pfam" id="PF22820">
    <property type="entry name" value="TcaA_3rd_4th"/>
    <property type="match status" value="1"/>
</dbReference>
<dbReference type="Pfam" id="PF22819">
    <property type="entry name" value="TcaA_5th"/>
    <property type="match status" value="1"/>
</dbReference>
<dbReference type="PIRSF" id="PIRSF032522">
    <property type="entry name" value="TcaA"/>
    <property type="match status" value="1"/>
</dbReference>
<keyword id="KW-0046">Antibiotic resistance</keyword>
<keyword id="KW-1003">Cell membrane</keyword>
<keyword id="KW-0472">Membrane</keyword>
<keyword id="KW-0479">Metal-binding</keyword>
<keyword id="KW-0812">Transmembrane</keyword>
<keyword id="KW-1133">Transmembrane helix</keyword>
<keyword id="KW-0862">Zinc</keyword>
<keyword id="KW-0863">Zinc-finger</keyword>
<reference key="1">
    <citation type="journal article" date="2001" name="Lancet">
        <title>Whole genome sequencing of meticillin-resistant Staphylococcus aureus.</title>
        <authorList>
            <person name="Kuroda M."/>
            <person name="Ohta T."/>
            <person name="Uchiyama I."/>
            <person name="Baba T."/>
            <person name="Yuzawa H."/>
            <person name="Kobayashi I."/>
            <person name="Cui L."/>
            <person name="Oguchi A."/>
            <person name="Aoki K."/>
            <person name="Nagai Y."/>
            <person name="Lian J.-Q."/>
            <person name="Ito T."/>
            <person name="Kanamori M."/>
            <person name="Matsumaru H."/>
            <person name="Maruyama A."/>
            <person name="Murakami H."/>
            <person name="Hosoyama A."/>
            <person name="Mizutani-Ui Y."/>
            <person name="Takahashi N.K."/>
            <person name="Sawano T."/>
            <person name="Inoue R."/>
            <person name="Kaito C."/>
            <person name="Sekimizu K."/>
            <person name="Hirakawa H."/>
            <person name="Kuhara S."/>
            <person name="Goto S."/>
            <person name="Yabuzaki J."/>
            <person name="Kanehisa M."/>
            <person name="Yamashita A."/>
            <person name="Oshima K."/>
            <person name="Furuya K."/>
            <person name="Yoshino C."/>
            <person name="Shiba T."/>
            <person name="Hattori M."/>
            <person name="Ogasawara N."/>
            <person name="Hayashi H."/>
            <person name="Hiramatsu K."/>
        </authorList>
    </citation>
    <scope>NUCLEOTIDE SEQUENCE [LARGE SCALE GENOMIC DNA]</scope>
    <source>
        <strain>Mu50 / ATCC 700699</strain>
    </source>
</reference>
<reference key="2">
    <citation type="journal article" date="2005" name="Biochim. Biophys. Acta">
        <title>Expression of tcaA and mprF and glycopeptide resistance in clinical glycopeptide-intermediate Staphylococcus aureus (GISA) and heteroGISA strains.</title>
        <authorList>
            <person name="Wootton M."/>
            <person name="Macgowan A.P."/>
            <person name="Walsh T.R."/>
        </authorList>
    </citation>
    <scope>INDUCTION BY VANCOMYCIN</scope>
</reference>
<reference key="3">
    <citation type="journal article" date="2006" name="Biochim. Biophys. Acta">
        <title>Strain dependence of the cell wall-damage induced stimulon in Staphylococcus aureus.</title>
        <authorList>
            <person name="McCallum N."/>
            <person name="Spehar G."/>
            <person name="Bischoff M."/>
            <person name="Berger-Bachi B."/>
        </authorList>
    </citation>
    <scope>INDUCTION BY VANCOMYCIN</scope>
</reference>